<reference evidence="4" key="1">
    <citation type="submission" date="2003-08" db="EMBL/GenBank/DDBJ databases">
        <title>Identification of new putative rat taste receptors belonging to the T2R family.</title>
        <authorList>
            <person name="Conte C."/>
            <person name="Ebeling M."/>
            <person name="Marcuz A."/>
            <person name="Andres-Barquin P.J."/>
        </authorList>
    </citation>
    <scope>NUCLEOTIDE SEQUENCE [GENOMIC DNA]</scope>
    <source>
        <strain evidence="4">Sprague-Dawley</strain>
    </source>
</reference>
<keyword id="KW-0297">G-protein coupled receptor</keyword>
<keyword id="KW-0325">Glycoprotein</keyword>
<keyword id="KW-0472">Membrane</keyword>
<keyword id="KW-0675">Receptor</keyword>
<keyword id="KW-1185">Reference proteome</keyword>
<keyword id="KW-0716">Sensory transduction</keyword>
<keyword id="KW-0919">Taste</keyword>
<keyword id="KW-0807">Transducer</keyword>
<keyword id="KW-0812">Transmembrane</keyword>
<keyword id="KW-1133">Transmembrane helix</keyword>
<gene>
    <name evidence="1" type="primary">Tas2r116</name>
    <name type="synonym">T2r33</name>
</gene>
<sequence>MNGVLYITFTVILSVEVIIGNFGNGIIALVNIMDLAKRRKISSVDQILTALAISRIVLLWLVLVSWWLSMFYPGQWMTEGIDVIVHNVWTTLNQISLWLATSFSVFCFLKVANFSNTIFFYLKIRVKKVMTGTLIMFLLLLGLNIIVINASKTILIPEYKVNMSNSLNLKNTQISMLFPFANTLFGFIPFAVSLVTFLLLFFSLWKHQRKMHHGAQGCRDSSTKAHIRVLQTLIASILLYFVFFLSLVVKVWISLFLERMLLLLITQAAKIAFPSLHPWVLILGNAKLRKASLSALQWLRCRHKDEHRRVQRPEVHSCGSSCMP</sequence>
<proteinExistence type="inferred from homology"/>
<protein>
    <recommendedName>
        <fullName>Taste receptor type 2 member 116</fullName>
        <shortName>T2R116</shortName>
    </recommendedName>
    <alternativeName>
        <fullName>Taste receptor type 2 member 33</fullName>
        <shortName>T2R33</shortName>
    </alternativeName>
</protein>
<feature type="chain" id="PRO_0000248476" description="Taste receptor type 2 member 116">
    <location>
        <begin position="1"/>
        <end position="324"/>
    </location>
</feature>
<feature type="topological domain" description="Extracellular" evidence="2">
    <location>
        <begin position="1"/>
        <end position="2"/>
    </location>
</feature>
<feature type="transmembrane region" description="Helical; Name=1" evidence="2">
    <location>
        <begin position="3"/>
        <end position="23"/>
    </location>
</feature>
<feature type="topological domain" description="Cytoplasmic" evidence="2">
    <location>
        <begin position="24"/>
        <end position="55"/>
    </location>
</feature>
<feature type="transmembrane region" description="Helical; Name=2" evidence="2">
    <location>
        <begin position="56"/>
        <end position="76"/>
    </location>
</feature>
<feature type="topological domain" description="Extracellular" evidence="2">
    <location>
        <begin position="77"/>
        <end position="94"/>
    </location>
</feature>
<feature type="transmembrane region" description="Helical; Name=3" evidence="2">
    <location>
        <begin position="95"/>
        <end position="115"/>
    </location>
</feature>
<feature type="topological domain" description="Cytoplasmic" evidence="2">
    <location>
        <begin position="116"/>
        <end position="128"/>
    </location>
</feature>
<feature type="transmembrane region" description="Helical; Name=4" evidence="2">
    <location>
        <begin position="129"/>
        <end position="149"/>
    </location>
</feature>
<feature type="topological domain" description="Extracellular" evidence="2">
    <location>
        <begin position="150"/>
        <end position="183"/>
    </location>
</feature>
<feature type="transmembrane region" description="Helical; Name=5" evidence="2">
    <location>
        <begin position="184"/>
        <end position="204"/>
    </location>
</feature>
<feature type="topological domain" description="Cytoplasmic" evidence="2">
    <location>
        <begin position="205"/>
        <end position="236"/>
    </location>
</feature>
<feature type="transmembrane region" description="Helical; Name=6" evidence="2">
    <location>
        <begin position="237"/>
        <end position="257"/>
    </location>
</feature>
<feature type="topological domain" description="Extracellular" evidence="2">
    <location>
        <begin position="258"/>
        <end position="261"/>
    </location>
</feature>
<feature type="transmembrane region" description="Helical; Name=7" evidence="2">
    <location>
        <begin position="262"/>
        <end position="282"/>
    </location>
</feature>
<feature type="topological domain" description="Cytoplasmic" evidence="2">
    <location>
        <begin position="283"/>
        <end position="324"/>
    </location>
</feature>
<feature type="glycosylation site" description="N-linked (GlcNAc...) asparagine" evidence="2">
    <location>
        <position position="162"/>
    </location>
</feature>
<comment type="function">
    <text evidence="3">Putative taste receptor which may play a role in the perception of bitterness.</text>
</comment>
<comment type="subcellular location">
    <subcellularLocation>
        <location evidence="3">Membrane</location>
        <topology evidence="3">Multi-pass membrane protein</topology>
    </subcellularLocation>
</comment>
<comment type="miscellaneous">
    <text evidence="3">Several bitter taste receptors are expressed in a single taste receptor cell.</text>
</comment>
<comment type="similarity">
    <text evidence="2">Belongs to the G-protein coupled receptor T2R family.</text>
</comment>
<organism>
    <name type="scientific">Rattus norvegicus</name>
    <name type="common">Rat</name>
    <dbReference type="NCBI Taxonomy" id="10116"/>
    <lineage>
        <taxon>Eukaryota</taxon>
        <taxon>Metazoa</taxon>
        <taxon>Chordata</taxon>
        <taxon>Craniata</taxon>
        <taxon>Vertebrata</taxon>
        <taxon>Euteleostomi</taxon>
        <taxon>Mammalia</taxon>
        <taxon>Eutheria</taxon>
        <taxon>Euarchontoglires</taxon>
        <taxon>Glires</taxon>
        <taxon>Rodentia</taxon>
        <taxon>Myomorpha</taxon>
        <taxon>Muroidea</taxon>
        <taxon>Muridae</taxon>
        <taxon>Murinae</taxon>
        <taxon>Rattus</taxon>
    </lineage>
</organism>
<dbReference type="EMBL" id="AY362752">
    <property type="protein sequence ID" value="AAR13361.1"/>
    <property type="molecule type" value="Genomic_DNA"/>
</dbReference>
<dbReference type="RefSeq" id="NP_001160151.1">
    <property type="nucleotide sequence ID" value="NM_001166679.1"/>
</dbReference>
<dbReference type="SMR" id="Q67ER8"/>
<dbReference type="FunCoup" id="Q67ER8">
    <property type="interactions" value="80"/>
</dbReference>
<dbReference type="STRING" id="10116.ENSRNOP00000036964"/>
<dbReference type="GlyCosmos" id="Q67ER8">
    <property type="glycosylation" value="1 site, No reported glycans"/>
</dbReference>
<dbReference type="GlyGen" id="Q67ER8">
    <property type="glycosylation" value="1 site"/>
</dbReference>
<dbReference type="PaxDb" id="10116-ENSRNOP00000036964"/>
<dbReference type="Ensembl" id="ENSRNOT00000028970.3">
    <property type="protein sequence ID" value="ENSRNOP00000036964.2"/>
    <property type="gene ID" value="ENSRNOG00000021366.3"/>
</dbReference>
<dbReference type="GeneID" id="100310877"/>
<dbReference type="KEGG" id="rno:100310877"/>
<dbReference type="UCSC" id="RGD:2314261">
    <property type="organism name" value="rat"/>
</dbReference>
<dbReference type="AGR" id="RGD:2314261"/>
<dbReference type="CTD" id="112408"/>
<dbReference type="RGD" id="2314261">
    <property type="gene designation" value="Tas2r116"/>
</dbReference>
<dbReference type="eggNOG" id="ENOG502SKRK">
    <property type="taxonomic scope" value="Eukaryota"/>
</dbReference>
<dbReference type="GeneTree" id="ENSGT01100000263477"/>
<dbReference type="HOGENOM" id="CLU_072337_3_0_1"/>
<dbReference type="InParanoid" id="Q67ER8"/>
<dbReference type="OMA" id="WLRCRHK"/>
<dbReference type="OrthoDB" id="8876749at2759"/>
<dbReference type="PhylomeDB" id="Q67ER8"/>
<dbReference type="TreeFam" id="TF335891"/>
<dbReference type="PRO" id="PR:Q67ER8"/>
<dbReference type="Proteomes" id="UP000002494">
    <property type="component" value="Chromosome 4"/>
</dbReference>
<dbReference type="GO" id="GO:0016020">
    <property type="term" value="C:membrane"/>
    <property type="evidence" value="ECO:0000318"/>
    <property type="project" value="GO_Central"/>
</dbReference>
<dbReference type="GO" id="GO:0033038">
    <property type="term" value="F:bitter taste receptor activity"/>
    <property type="evidence" value="ECO:0000266"/>
    <property type="project" value="RGD"/>
</dbReference>
<dbReference type="GO" id="GO:0004930">
    <property type="term" value="F:G protein-coupled receptor activity"/>
    <property type="evidence" value="ECO:0007669"/>
    <property type="project" value="UniProtKB-KW"/>
</dbReference>
<dbReference type="GO" id="GO:0008527">
    <property type="term" value="F:taste receptor activity"/>
    <property type="evidence" value="ECO:0000266"/>
    <property type="project" value="RGD"/>
</dbReference>
<dbReference type="GO" id="GO:0001580">
    <property type="term" value="P:detection of chemical stimulus involved in sensory perception of bitter taste"/>
    <property type="evidence" value="ECO:0000266"/>
    <property type="project" value="RGD"/>
</dbReference>
<dbReference type="CDD" id="cd15019">
    <property type="entry name" value="7tm_TAS2R14-like"/>
    <property type="match status" value="1"/>
</dbReference>
<dbReference type="FunFam" id="1.20.1070.10:FF:000042">
    <property type="entry name" value="Taste receptor type 2 member 7"/>
    <property type="match status" value="1"/>
</dbReference>
<dbReference type="Gene3D" id="1.20.1070.10">
    <property type="entry name" value="Rhodopsin 7-helix transmembrane proteins"/>
    <property type="match status" value="1"/>
</dbReference>
<dbReference type="InterPro" id="IPR017452">
    <property type="entry name" value="GPCR_Rhodpsn_7TM"/>
</dbReference>
<dbReference type="InterPro" id="IPR007960">
    <property type="entry name" value="TAS2R"/>
</dbReference>
<dbReference type="PANTHER" id="PTHR11394">
    <property type="entry name" value="TASTE RECEPTOR TYPE 2"/>
    <property type="match status" value="1"/>
</dbReference>
<dbReference type="PANTHER" id="PTHR11394:SF51">
    <property type="entry name" value="TASTE RECEPTOR TYPE 2 MEMBER 116"/>
    <property type="match status" value="1"/>
</dbReference>
<dbReference type="Pfam" id="PF05296">
    <property type="entry name" value="TAS2R"/>
    <property type="match status" value="1"/>
</dbReference>
<dbReference type="SUPFAM" id="SSF81321">
    <property type="entry name" value="Family A G protein-coupled receptor-like"/>
    <property type="match status" value="1"/>
</dbReference>
<dbReference type="PROSITE" id="PS50262">
    <property type="entry name" value="G_PROTEIN_RECEP_F1_2"/>
    <property type="match status" value="1"/>
</dbReference>
<accession>Q67ER8</accession>
<name>TR116_RAT</name>
<evidence type="ECO:0000250" key="1">
    <source>
        <dbReference type="UniProtKB" id="Q7M713"/>
    </source>
</evidence>
<evidence type="ECO:0000255" key="2"/>
<evidence type="ECO:0000305" key="3"/>
<evidence type="ECO:0000312" key="4">
    <source>
        <dbReference type="EMBL" id="AAR13361.1"/>
    </source>
</evidence>